<gene>
    <name type="primary">cript</name>
    <name type="ORF">zgc:110618</name>
</gene>
<protein>
    <recommendedName>
        <fullName>Cysteine-rich PDZ-binding protein</fullName>
    </recommendedName>
    <alternativeName>
        <fullName>Cysteine-rich interactor of PDZ three</fullName>
        <shortName>Cysteine-rich interactor of PDZ3</shortName>
    </alternativeName>
</protein>
<feature type="chain" id="PRO_0000314567" description="Cysteine-rich PDZ-binding protein">
    <location>
        <begin position="1"/>
        <end position="101"/>
    </location>
</feature>
<evidence type="ECO:0000250" key="1"/>
<evidence type="ECO:0000250" key="2">
    <source>
        <dbReference type="UniProtKB" id="Q9P021"/>
    </source>
</evidence>
<evidence type="ECO:0000305" key="3"/>
<comment type="function">
    <text evidence="2">As a component of the minor spliceosome, involved in the splicing of U12-type introns in pre-mRNAs.</text>
</comment>
<comment type="subunit">
    <text evidence="2">Component of the minor spliceosome, which splices U12-type introns.</text>
</comment>
<comment type="subcellular location">
    <subcellularLocation>
        <location evidence="1">Cytoplasm</location>
    </subcellularLocation>
</comment>
<comment type="similarity">
    <text evidence="3">Belongs to the CRIPT family.</text>
</comment>
<proteinExistence type="inferred from homology"/>
<organism>
    <name type="scientific">Danio rerio</name>
    <name type="common">Zebrafish</name>
    <name type="synonym">Brachydanio rerio</name>
    <dbReference type="NCBI Taxonomy" id="7955"/>
    <lineage>
        <taxon>Eukaryota</taxon>
        <taxon>Metazoa</taxon>
        <taxon>Chordata</taxon>
        <taxon>Craniata</taxon>
        <taxon>Vertebrata</taxon>
        <taxon>Euteleostomi</taxon>
        <taxon>Actinopterygii</taxon>
        <taxon>Neopterygii</taxon>
        <taxon>Teleostei</taxon>
        <taxon>Ostariophysi</taxon>
        <taxon>Cypriniformes</taxon>
        <taxon>Danionidae</taxon>
        <taxon>Danioninae</taxon>
        <taxon>Danio</taxon>
    </lineage>
</organism>
<sequence>MVCEKCEKKLGRVITPDTWKDGARNTTESGGRKLNENKMLTSKKARFDPYGKSGFATCRICKSSVHQSGSHYCQGCAYKKGICAMCGKKVIDTKNYKQTSV</sequence>
<keyword id="KW-0963">Cytoplasm</keyword>
<keyword id="KW-0507">mRNA processing</keyword>
<keyword id="KW-0508">mRNA splicing</keyword>
<keyword id="KW-1185">Reference proteome</keyword>
<keyword id="KW-0747">Spliceosome</keyword>
<accession>Q567Z6</accession>
<reference key="1">
    <citation type="submission" date="2005-04" db="EMBL/GenBank/DDBJ databases">
        <authorList>
            <consortium name="NIH - Zebrafish Gene Collection (ZGC) project"/>
        </authorList>
    </citation>
    <scope>NUCLEOTIDE SEQUENCE [LARGE SCALE MRNA]</scope>
    <source>
        <tissue>Embryo</tissue>
    </source>
</reference>
<name>CRIPT_DANRE</name>
<dbReference type="EMBL" id="BC092953">
    <property type="protein sequence ID" value="AAH92953.1"/>
    <property type="molecule type" value="mRNA"/>
</dbReference>
<dbReference type="RefSeq" id="NP_001017893.1">
    <property type="nucleotide sequence ID" value="NM_001017893.1"/>
</dbReference>
<dbReference type="SMR" id="Q567Z6"/>
<dbReference type="FunCoup" id="Q567Z6">
    <property type="interactions" value="993"/>
</dbReference>
<dbReference type="STRING" id="7955.ENSDARP00000131077"/>
<dbReference type="Ensembl" id="ENSDART00000158036">
    <property type="protein sequence ID" value="ENSDARP00000131077"/>
    <property type="gene ID" value="ENSDARG00000102511"/>
</dbReference>
<dbReference type="GeneID" id="550592"/>
<dbReference type="KEGG" id="dre:550592"/>
<dbReference type="AGR" id="ZFIN:ZDB-GENE-050417-451"/>
<dbReference type="CTD" id="9419"/>
<dbReference type="ZFIN" id="ZDB-GENE-050417-451">
    <property type="gene designation" value="cript"/>
</dbReference>
<dbReference type="HOGENOM" id="CLU_133934_0_0_1"/>
<dbReference type="InParanoid" id="Q567Z6"/>
<dbReference type="OMA" id="MPCDKCE"/>
<dbReference type="OrthoDB" id="147332at2759"/>
<dbReference type="PhylomeDB" id="Q567Z6"/>
<dbReference type="PRO" id="PR:Q567Z6"/>
<dbReference type="Proteomes" id="UP000000437">
    <property type="component" value="Chromosome 12"/>
</dbReference>
<dbReference type="Bgee" id="ENSDARG00000102511">
    <property type="expression patterns" value="Expressed in early embryo and 21 other cell types or tissues"/>
</dbReference>
<dbReference type="ExpressionAtlas" id="Q567Z6">
    <property type="expression patterns" value="baseline"/>
</dbReference>
<dbReference type="GO" id="GO:0005737">
    <property type="term" value="C:cytoplasm"/>
    <property type="evidence" value="ECO:0007669"/>
    <property type="project" value="UniProtKB-SubCell"/>
</dbReference>
<dbReference type="GO" id="GO:0030425">
    <property type="term" value="C:dendrite"/>
    <property type="evidence" value="ECO:0000318"/>
    <property type="project" value="GO_Central"/>
</dbReference>
<dbReference type="GO" id="GO:0005681">
    <property type="term" value="C:spliceosomal complex"/>
    <property type="evidence" value="ECO:0007669"/>
    <property type="project" value="UniProtKB-KW"/>
</dbReference>
<dbReference type="GO" id="GO:0008017">
    <property type="term" value="F:microtubule binding"/>
    <property type="evidence" value="ECO:0000318"/>
    <property type="project" value="GO_Central"/>
</dbReference>
<dbReference type="GO" id="GO:0031122">
    <property type="term" value="P:cytoplasmic microtubule organization"/>
    <property type="evidence" value="ECO:0000318"/>
    <property type="project" value="GO_Central"/>
</dbReference>
<dbReference type="GO" id="GO:0006397">
    <property type="term" value="P:mRNA processing"/>
    <property type="evidence" value="ECO:0007669"/>
    <property type="project" value="UniProtKB-KW"/>
</dbReference>
<dbReference type="GO" id="GO:0008380">
    <property type="term" value="P:RNA splicing"/>
    <property type="evidence" value="ECO:0007669"/>
    <property type="project" value="UniProtKB-KW"/>
</dbReference>
<dbReference type="InterPro" id="IPR019367">
    <property type="entry name" value="PDZ-binding_CRIPT"/>
</dbReference>
<dbReference type="PANTHER" id="PTHR11805">
    <property type="entry name" value="CYSTEINE-RICH PDZ-BINDING PROTEIN"/>
    <property type="match status" value="1"/>
</dbReference>
<dbReference type="PANTHER" id="PTHR11805:SF1">
    <property type="entry name" value="CYSTEINE-RICH PDZ-BINDING PROTEIN"/>
    <property type="match status" value="1"/>
</dbReference>
<dbReference type="Pfam" id="PF10235">
    <property type="entry name" value="Cript"/>
    <property type="match status" value="1"/>
</dbReference>